<reference key="1">
    <citation type="journal article" date="2004" name="Genome Res.">
        <title>The status, quality, and expansion of the NIH full-length cDNA project: the Mammalian Gene Collection (MGC).</title>
        <authorList>
            <consortium name="The MGC Project Team"/>
        </authorList>
    </citation>
    <scope>NUCLEOTIDE SEQUENCE [LARGE SCALE MRNA] (ISOFORM 1)</scope>
    <scope>NUCLEOTIDE SEQUENCE [LARGE SCALE MRNA] OF 5-347 (ISOFORM 2)</scope>
    <source>
        <tissue>Lymph</tissue>
    </source>
</reference>
<reference key="2">
    <citation type="journal article" date="2004" name="Nat. Genet.">
        <title>Complete sequencing and characterization of 21,243 full-length human cDNAs.</title>
        <authorList>
            <person name="Ota T."/>
            <person name="Suzuki Y."/>
            <person name="Nishikawa T."/>
            <person name="Otsuki T."/>
            <person name="Sugiyama T."/>
            <person name="Irie R."/>
            <person name="Wakamatsu A."/>
            <person name="Hayashi K."/>
            <person name="Sato H."/>
            <person name="Nagai K."/>
            <person name="Kimura K."/>
            <person name="Makita H."/>
            <person name="Sekine M."/>
            <person name="Obayashi M."/>
            <person name="Nishi T."/>
            <person name="Shibahara T."/>
            <person name="Tanaka T."/>
            <person name="Ishii S."/>
            <person name="Yamamoto J."/>
            <person name="Saito K."/>
            <person name="Kawai Y."/>
            <person name="Isono Y."/>
            <person name="Nakamura Y."/>
            <person name="Nagahari K."/>
            <person name="Murakami K."/>
            <person name="Yasuda T."/>
            <person name="Iwayanagi T."/>
            <person name="Wagatsuma M."/>
            <person name="Shiratori A."/>
            <person name="Sudo H."/>
            <person name="Hosoiri T."/>
            <person name="Kaku Y."/>
            <person name="Kodaira H."/>
            <person name="Kondo H."/>
            <person name="Sugawara M."/>
            <person name="Takahashi M."/>
            <person name="Kanda K."/>
            <person name="Yokoi T."/>
            <person name="Furuya T."/>
            <person name="Kikkawa E."/>
            <person name="Omura Y."/>
            <person name="Abe K."/>
            <person name="Kamihara K."/>
            <person name="Katsuta N."/>
            <person name="Sato K."/>
            <person name="Tanikawa M."/>
            <person name="Yamazaki M."/>
            <person name="Ninomiya K."/>
            <person name="Ishibashi T."/>
            <person name="Yamashita H."/>
            <person name="Murakawa K."/>
            <person name="Fujimori K."/>
            <person name="Tanai H."/>
            <person name="Kimata M."/>
            <person name="Watanabe M."/>
            <person name="Hiraoka S."/>
            <person name="Chiba Y."/>
            <person name="Ishida S."/>
            <person name="Ono Y."/>
            <person name="Takiguchi S."/>
            <person name="Watanabe S."/>
            <person name="Yosida M."/>
            <person name="Hotuta T."/>
            <person name="Kusano J."/>
            <person name="Kanehori K."/>
            <person name="Takahashi-Fujii A."/>
            <person name="Hara H."/>
            <person name="Tanase T.-O."/>
            <person name="Nomura Y."/>
            <person name="Togiya S."/>
            <person name="Komai F."/>
            <person name="Hara R."/>
            <person name="Takeuchi K."/>
            <person name="Arita M."/>
            <person name="Imose N."/>
            <person name="Musashino K."/>
            <person name="Yuuki H."/>
            <person name="Oshima A."/>
            <person name="Sasaki N."/>
            <person name="Aotsuka S."/>
            <person name="Yoshikawa Y."/>
            <person name="Matsunawa H."/>
            <person name="Ichihara T."/>
            <person name="Shiohata N."/>
            <person name="Sano S."/>
            <person name="Moriya S."/>
            <person name="Momiyama H."/>
            <person name="Satoh N."/>
            <person name="Takami S."/>
            <person name="Terashima Y."/>
            <person name="Suzuki O."/>
            <person name="Nakagawa S."/>
            <person name="Senoh A."/>
            <person name="Mizoguchi H."/>
            <person name="Goto Y."/>
            <person name="Shimizu F."/>
            <person name="Wakebe H."/>
            <person name="Hishigaki H."/>
            <person name="Watanabe T."/>
            <person name="Sugiyama A."/>
            <person name="Takemoto M."/>
            <person name="Kawakami B."/>
            <person name="Yamazaki M."/>
            <person name="Watanabe K."/>
            <person name="Kumagai A."/>
            <person name="Itakura S."/>
            <person name="Fukuzumi Y."/>
            <person name="Fujimori Y."/>
            <person name="Komiyama M."/>
            <person name="Tashiro H."/>
            <person name="Tanigami A."/>
            <person name="Fujiwara T."/>
            <person name="Ono T."/>
            <person name="Yamada K."/>
            <person name="Fujii Y."/>
            <person name="Ozaki K."/>
            <person name="Hirao M."/>
            <person name="Ohmori Y."/>
            <person name="Kawabata A."/>
            <person name="Hikiji T."/>
            <person name="Kobatake N."/>
            <person name="Inagaki H."/>
            <person name="Ikema Y."/>
            <person name="Okamoto S."/>
            <person name="Okitani R."/>
            <person name="Kawakami T."/>
            <person name="Noguchi S."/>
            <person name="Itoh T."/>
            <person name="Shigeta K."/>
            <person name="Senba T."/>
            <person name="Matsumura K."/>
            <person name="Nakajima Y."/>
            <person name="Mizuno T."/>
            <person name="Morinaga M."/>
            <person name="Sasaki M."/>
            <person name="Togashi T."/>
            <person name="Oyama M."/>
            <person name="Hata H."/>
            <person name="Watanabe M."/>
            <person name="Komatsu T."/>
            <person name="Mizushima-Sugano J."/>
            <person name="Satoh T."/>
            <person name="Shirai Y."/>
            <person name="Takahashi Y."/>
            <person name="Nakagawa K."/>
            <person name="Okumura K."/>
            <person name="Nagase T."/>
            <person name="Nomura N."/>
            <person name="Kikuchi H."/>
            <person name="Masuho Y."/>
            <person name="Yamashita R."/>
            <person name="Nakai K."/>
            <person name="Yada T."/>
            <person name="Nakamura Y."/>
            <person name="Ohara O."/>
            <person name="Isogai T."/>
            <person name="Sugano S."/>
        </authorList>
    </citation>
    <scope>NUCLEOTIDE SEQUENCE [LARGE SCALE MRNA] OF 123-347 (ISOFORM 1)</scope>
    <source>
        <tissue>Teratocarcinoma</tissue>
    </source>
</reference>
<reference key="3">
    <citation type="journal article" date="2007" name="BMC Genomics">
        <title>The full-ORF clone resource of the German cDNA consortium.</title>
        <authorList>
            <person name="Bechtel S."/>
            <person name="Rosenfelder H."/>
            <person name="Duda A."/>
            <person name="Schmidt C.P."/>
            <person name="Ernst U."/>
            <person name="Wellenreuther R."/>
            <person name="Mehrle A."/>
            <person name="Schuster C."/>
            <person name="Bahr A."/>
            <person name="Bloecker H."/>
            <person name="Heubner D."/>
            <person name="Hoerlein A."/>
            <person name="Michel G."/>
            <person name="Wedler H."/>
            <person name="Koehrer K."/>
            <person name="Ottenwaelder B."/>
            <person name="Poustka A."/>
            <person name="Wiemann S."/>
            <person name="Schupp I."/>
        </authorList>
    </citation>
    <scope>NUCLEOTIDE SEQUENCE [LARGE SCALE MRNA] OF 161-347</scope>
    <source>
        <tissue>Amygdala</tissue>
    </source>
</reference>
<reference key="4">
    <citation type="journal article" date="2008" name="Mol. Cell">
        <title>A TFTC/STAGA module mediates histone H2A and H2B deubiquitination, coactivates nuclear receptors, and counteracts heterochromatin silencing.</title>
        <authorList>
            <person name="Zhao Y."/>
            <person name="Lang G."/>
            <person name="Ito S."/>
            <person name="Bonnet J."/>
            <person name="Metzger E."/>
            <person name="Sawatsubashi S."/>
            <person name="Suzuki E."/>
            <person name="Le Guezennec X."/>
            <person name="Stunnenberg H.G."/>
            <person name="Krasnov A."/>
            <person name="Georgieva S.G."/>
            <person name="Schuele R."/>
            <person name="Takeyama K."/>
            <person name="Kato S."/>
            <person name="Tora L."/>
            <person name="Devys D."/>
        </authorList>
    </citation>
    <scope>FUNCTION</scope>
    <scope>IDENTIFICATION BY MASS SPECTROMETRY</scope>
    <scope>IDENTIFICATION IN THE SAGA COMPLEX</scope>
    <scope>INTERACTION WITH ENY2 AND USP22</scope>
    <scope>DOMAIN</scope>
</reference>
<reference key="5">
    <citation type="journal article" date="2008" name="Mol. Cell">
        <title>Kinase-selective enrichment enables quantitative phosphoproteomics of the kinome across the cell cycle.</title>
        <authorList>
            <person name="Daub H."/>
            <person name="Olsen J.V."/>
            <person name="Bairlein M."/>
            <person name="Gnad F."/>
            <person name="Oppermann F.S."/>
            <person name="Korner R."/>
            <person name="Greff Z."/>
            <person name="Keri G."/>
            <person name="Stemmann O."/>
            <person name="Mann M."/>
        </authorList>
    </citation>
    <scope>IDENTIFICATION BY MASS SPECTROMETRY [LARGE SCALE ANALYSIS]</scope>
    <source>
        <tissue>Cervix carcinoma</tissue>
    </source>
</reference>
<reference key="6">
    <citation type="journal article" date="2008" name="Proc. Natl. Acad. Sci. U.S.A.">
        <title>A quantitative atlas of mitotic phosphorylation.</title>
        <authorList>
            <person name="Dephoure N."/>
            <person name="Zhou C."/>
            <person name="Villen J."/>
            <person name="Beausoleil S.A."/>
            <person name="Bakalarski C.E."/>
            <person name="Elledge S.J."/>
            <person name="Gygi S.P."/>
        </authorList>
    </citation>
    <scope>PHOSPHORYLATION [LARGE SCALE ANALYSIS] AT SER-281</scope>
    <scope>IDENTIFICATION BY MASS SPECTROMETRY [LARGE SCALE ANALYSIS]</scope>
    <source>
        <tissue>Cervix carcinoma</tissue>
    </source>
</reference>
<reference key="7">
    <citation type="journal article" date="2009" name="Sci. Signal.">
        <title>Quantitative phosphoproteomic analysis of T cell receptor signaling reveals system-wide modulation of protein-protein interactions.</title>
        <authorList>
            <person name="Mayya V."/>
            <person name="Lundgren D.H."/>
            <person name="Hwang S.-I."/>
            <person name="Rezaul K."/>
            <person name="Wu L."/>
            <person name="Eng J.K."/>
            <person name="Rodionov V."/>
            <person name="Han D.K."/>
        </authorList>
    </citation>
    <scope>PHOSPHORYLATION [LARGE SCALE ANALYSIS] AT SER-278 AND SER-281</scope>
    <scope>IDENTIFICATION BY MASS SPECTROMETRY [LARGE SCALE ANALYSIS]</scope>
    <source>
        <tissue>Leukemic T-cell</tissue>
    </source>
</reference>
<reference key="8">
    <citation type="journal article" date="2010" name="Sci. Signal.">
        <title>Quantitative phosphoproteomics reveals widespread full phosphorylation site occupancy during mitosis.</title>
        <authorList>
            <person name="Olsen J.V."/>
            <person name="Vermeulen M."/>
            <person name="Santamaria A."/>
            <person name="Kumar C."/>
            <person name="Miller M.L."/>
            <person name="Jensen L.J."/>
            <person name="Gnad F."/>
            <person name="Cox J."/>
            <person name="Jensen T.S."/>
            <person name="Nigg E.A."/>
            <person name="Brunak S."/>
            <person name="Mann M."/>
        </authorList>
    </citation>
    <scope>PHOSPHORYLATION [LARGE SCALE ANALYSIS] AT SER-281 AND SER-326</scope>
    <scope>IDENTIFICATION BY MASS SPECTROMETRY [LARGE SCALE ANALYSIS]</scope>
    <source>
        <tissue>Cervix carcinoma</tissue>
    </source>
</reference>
<reference key="9">
    <citation type="journal article" date="2011" name="Mol. Cell. Biol.">
        <title>The tightly controlled deubiquitination activity of the human SAGA complex differentially modifies distinct gene regulatory elements.</title>
        <authorList>
            <person name="Lang G."/>
            <person name="Bonnet J."/>
            <person name="Umlauf D."/>
            <person name="Karmodiya K."/>
            <person name="Koffler J."/>
            <person name="Stierle M."/>
            <person name="Devys D."/>
            <person name="Tora L."/>
        </authorList>
    </citation>
    <scope>FUNCTION</scope>
    <scope>IDENTIFICATION IN THE SAGA COMPLEX</scope>
</reference>
<reference key="10">
    <citation type="journal article" date="2011" name="Sci. Signal.">
        <title>System-wide temporal characterization of the proteome and phosphoproteome of human embryonic stem cell differentiation.</title>
        <authorList>
            <person name="Rigbolt K.T."/>
            <person name="Prokhorova T.A."/>
            <person name="Akimov V."/>
            <person name="Henningsen J."/>
            <person name="Johansen P.T."/>
            <person name="Kratchmarova I."/>
            <person name="Kassem M."/>
            <person name="Mann M."/>
            <person name="Olsen J.V."/>
            <person name="Blagoev B."/>
        </authorList>
    </citation>
    <scope>PHOSPHORYLATION [LARGE SCALE ANALYSIS] AT SER-129; SER-131 AND SER-281</scope>
    <scope>IDENTIFICATION BY MASS SPECTROMETRY [LARGE SCALE ANALYSIS]</scope>
</reference>
<reference key="11">
    <citation type="journal article" date="2013" name="J. Proteome Res.">
        <title>Toward a comprehensive characterization of a human cancer cell phosphoproteome.</title>
        <authorList>
            <person name="Zhou H."/>
            <person name="Di Palma S."/>
            <person name="Preisinger C."/>
            <person name="Peng M."/>
            <person name="Polat A.N."/>
            <person name="Heck A.J."/>
            <person name="Mohammed S."/>
        </authorList>
    </citation>
    <scope>PHOSPHORYLATION [LARGE SCALE ANALYSIS] AT SER-131; SER-281 AND SER-326</scope>
    <scope>IDENTIFICATION BY MASS SPECTROMETRY [LARGE SCALE ANALYSIS]</scope>
    <source>
        <tissue>Cervix carcinoma</tissue>
        <tissue>Erythroleukemia</tissue>
    </source>
</reference>
<reference key="12">
    <citation type="journal article" date="2014" name="J. Proteomics">
        <title>An enzyme assisted RP-RPLC approach for in-depth analysis of human liver phosphoproteome.</title>
        <authorList>
            <person name="Bian Y."/>
            <person name="Song C."/>
            <person name="Cheng K."/>
            <person name="Dong M."/>
            <person name="Wang F."/>
            <person name="Huang J."/>
            <person name="Sun D."/>
            <person name="Wang L."/>
            <person name="Ye M."/>
            <person name="Zou H."/>
        </authorList>
    </citation>
    <scope>PHOSPHORYLATION [LARGE SCALE ANALYSIS] AT SER-281</scope>
    <scope>IDENTIFICATION BY MASS SPECTROMETRY [LARGE SCALE ANALYSIS]</scope>
    <source>
        <tissue>Liver</tissue>
    </source>
</reference>
<reference key="13">
    <citation type="journal article" date="2016" name="Mol. Cell. Biol.">
        <title>Cytoplasmic ATXN7L3B interferes with nuclear functions of the SAGA deubiquitinase module.</title>
        <authorList>
            <person name="Li W."/>
            <person name="Atanassov B.S."/>
            <person name="Lan X."/>
            <person name="Mohan R.D."/>
            <person name="Swanson S.K."/>
            <person name="Farria A.T."/>
            <person name="Florens L."/>
            <person name="Washburn M.P."/>
            <person name="Workman J.L."/>
            <person name="Dent S.Y."/>
        </authorList>
    </citation>
    <scope>FUNCTION</scope>
    <scope>IDENTIFICATION IN THE SAGA COMPLEX</scope>
    <scope>INTERACTION WITH ENY2 AND USP22</scope>
    <scope>SUBCELLULAR LOCATION</scope>
</reference>
<reference key="14">
    <citation type="journal article" date="2010" name="EMBO Rep.">
        <title>The structural plasticity of SCA7 domains defines their differential nucleosome-binding properties.</title>
        <authorList>
            <person name="Bonnet J."/>
            <person name="Wang Y.H."/>
            <person name="Spedale G."/>
            <person name="Atkinson R.A."/>
            <person name="Romier C."/>
            <person name="Hamiche A."/>
            <person name="Pijnappel W.W."/>
            <person name="Timmers H.T."/>
            <person name="Tora L."/>
            <person name="Devys D."/>
            <person name="Kieffer B."/>
        </authorList>
    </citation>
    <scope>STRUCTURE BY NMR OF 197-276 IN COMPLEX WITH ZINC</scope>
</reference>
<keyword id="KW-0002">3D-structure</keyword>
<keyword id="KW-0010">Activator</keyword>
<keyword id="KW-0025">Alternative splicing</keyword>
<keyword id="KW-0156">Chromatin regulator</keyword>
<keyword id="KW-0479">Metal-binding</keyword>
<keyword id="KW-0539">Nucleus</keyword>
<keyword id="KW-0597">Phosphoprotein</keyword>
<keyword id="KW-1267">Proteomics identification</keyword>
<keyword id="KW-1185">Reference proteome</keyword>
<keyword id="KW-0804">Transcription</keyword>
<keyword id="KW-0805">Transcription regulation</keyword>
<keyword id="KW-0862">Zinc</keyword>
<keyword id="KW-0863">Zinc-finger</keyword>
<protein>
    <recommendedName>
        <fullName evidence="1">Ataxin-7-like protein 3</fullName>
    </recommendedName>
    <alternativeName>
        <fullName evidence="1">SAGA-associated factor 11 homolog</fullName>
    </alternativeName>
</protein>
<accession>Q14CW9</accession>
<accession>Q8IY68</accession>
<accession>Q96N40</accession>
<accession>Q9NPU5</accession>
<comment type="function">
    <text evidence="1 3 4 5">Component of the transcription regulatory histone acetylation (HAT) complex SAGA, a multiprotein complex that activates transcription by remodeling chromatin and mediating histone acetylation and deubiquitination. Within the SAGA complex, participates in a subcomplex that specifically deubiquitinates both histones H2A and H2B (PubMed:18206972, PubMed:21746879). The SAGA complex is recruited to specific gene promoters by activators such as MYC, where it is required for transcription. Required for nuclear receptor-mediated transactivation. Within the complex, it is required to recruit USP22 and ENY2 into the SAGA complex (PubMed:18206972). Regulates H2B monoubiquitination (H2Bub1) levels. Affects subcellular distribution of ENY2, USP22 and ATXN7L3B (PubMed:27601583).</text>
</comment>
<comment type="subunit">
    <text evidence="1 3 4 5">Component of some SAGA transcription coactivator-HAT complexes, at least composed of ATXN7, ATXN7L3, ENY2, GCN5L2, SUPT3H, TAF10, TRRAP and USP22. Within the SAGA complex, ENY2, ATXN7, ATXN7L3, and USP22 form an additional subcomplex of SAGA called the DUB module (deubiquitination module) (PubMed:18206972, PubMed:21746879, PubMed:27601583). Interacts directly with ENY2 and USP22 (PubMed:18206972).</text>
</comment>
<comment type="interaction">
    <interactant intactId="EBI-949215">
        <id>Q14CW9</id>
    </interactant>
    <interactant intactId="EBI-719226">
        <id>Q9NPA8</id>
        <label>ENY2</label>
    </interactant>
    <organismsDiffer>false</organismsDiffer>
    <experiments>9</experiments>
</comment>
<comment type="interaction">
    <interactant intactId="EBI-949215">
        <id>Q14CW9</id>
    </interactant>
    <interactant intactId="EBI-12074414">
        <id>Q9UPT9-2</id>
        <label>USP22</label>
    </interactant>
    <organismsDiffer>false</organismsDiffer>
    <experiments>3</experiments>
</comment>
<comment type="subcellular location">
    <subcellularLocation>
        <location evidence="1 5">Nucleus</location>
    </subcellularLocation>
</comment>
<comment type="alternative products">
    <event type="alternative splicing"/>
    <isoform>
        <id>Q14CW9-1</id>
        <name>1</name>
        <sequence type="displayed"/>
    </isoform>
    <isoform>
        <id>Q14CW9-2</id>
        <name>2</name>
        <sequence type="described" ref="VSP_036721"/>
    </isoform>
</comment>
<comment type="domain">
    <text evidence="1 3">The long N-terminal helix forms part of the 'assembly lobe' of the SAGA deubiquitination module.</text>
</comment>
<comment type="domain">
    <text evidence="1">The C-terminal SGF11-type zinc-finger domain together with the C-terminal catalytic domain of USP22 forms the 'catalytic lobe' of the SAGA deubiquitination module.</text>
</comment>
<comment type="similarity">
    <text evidence="1">Belongs to the SGF11 family.</text>
</comment>
<comment type="sequence caution" evidence="7">
    <conflict type="erroneous initiation">
        <sequence resource="EMBL-CDS" id="AAH37418"/>
    </conflict>
</comment>
<comment type="sequence caution" evidence="7">
    <conflict type="erroneous initiation">
        <sequence resource="EMBL-CDS" id="BAB71070"/>
    </conflict>
</comment>
<gene>
    <name evidence="1" type="primary">ATXN7L3</name>
</gene>
<dbReference type="EMBL" id="BC037418">
    <property type="protein sequence ID" value="AAH37418.1"/>
    <property type="status" value="ALT_INIT"/>
    <property type="molecule type" value="mRNA"/>
</dbReference>
<dbReference type="EMBL" id="BC113595">
    <property type="protein sequence ID" value="AAI13596.1"/>
    <property type="molecule type" value="mRNA"/>
</dbReference>
<dbReference type="EMBL" id="BC126113">
    <property type="protein sequence ID" value="AAI26114.1"/>
    <property type="molecule type" value="mRNA"/>
</dbReference>
<dbReference type="EMBL" id="AK056002">
    <property type="protein sequence ID" value="BAB71070.1"/>
    <property type="status" value="ALT_INIT"/>
    <property type="molecule type" value="mRNA"/>
</dbReference>
<dbReference type="EMBL" id="AL390158">
    <property type="protein sequence ID" value="CAB99093.1"/>
    <property type="molecule type" value="mRNA"/>
</dbReference>
<dbReference type="CCDS" id="CCDS42345.1">
    <molecule id="Q14CW9-1"/>
</dbReference>
<dbReference type="CCDS" id="CCDS45697.1">
    <molecule id="Q14CW9-2"/>
</dbReference>
<dbReference type="RefSeq" id="NP_001092303.1">
    <property type="nucleotide sequence ID" value="NM_001098833.1"/>
</dbReference>
<dbReference type="RefSeq" id="NP_001369237.1">
    <molecule id="Q14CW9-2"/>
    <property type="nucleotide sequence ID" value="NM_001382308.1"/>
</dbReference>
<dbReference type="RefSeq" id="NP_001369238.1">
    <molecule id="Q14CW9-1"/>
    <property type="nucleotide sequence ID" value="NM_001382309.1"/>
</dbReference>
<dbReference type="RefSeq" id="NP_001369239.1">
    <molecule id="Q14CW9-2"/>
    <property type="nucleotide sequence ID" value="NM_001382310.1"/>
</dbReference>
<dbReference type="RefSeq" id="NP_001369240.1">
    <molecule id="Q14CW9-1"/>
    <property type="nucleotide sequence ID" value="NM_001382311.1"/>
</dbReference>
<dbReference type="RefSeq" id="NP_001369241.1">
    <molecule id="Q14CW9-1"/>
    <property type="nucleotide sequence ID" value="NM_001382312.1"/>
</dbReference>
<dbReference type="RefSeq" id="NP_001369242.1">
    <molecule id="Q14CW9-1"/>
    <property type="nucleotide sequence ID" value="NM_001382313.1"/>
</dbReference>
<dbReference type="RefSeq" id="NP_064603.1">
    <property type="nucleotide sequence ID" value="NM_020218.1"/>
</dbReference>
<dbReference type="RefSeq" id="XP_016880374.1">
    <property type="nucleotide sequence ID" value="XM_017024885.1"/>
</dbReference>
<dbReference type="RefSeq" id="XP_016880375.1">
    <property type="nucleotide sequence ID" value="XM_017024886.1"/>
</dbReference>
<dbReference type="PDB" id="2KKT">
    <property type="method" value="NMR"/>
    <property type="chains" value="A=197-276"/>
</dbReference>
<dbReference type="PDBsum" id="2KKT"/>
<dbReference type="BMRB" id="Q14CW9"/>
<dbReference type="SMR" id="Q14CW9"/>
<dbReference type="BioGRID" id="121289">
    <property type="interactions" value="53"/>
</dbReference>
<dbReference type="ComplexPortal" id="CPX-6802">
    <property type="entry name" value="SAGA complex, KAT2B variant"/>
</dbReference>
<dbReference type="ComplexPortal" id="CPX-900">
    <property type="entry name" value="SAGA complex, KAT2A variant"/>
</dbReference>
<dbReference type="ComplexPortal" id="CPX-903">
    <property type="entry name" value="TFTC histone acetylation complex"/>
</dbReference>
<dbReference type="CORUM" id="Q14CW9"/>
<dbReference type="FunCoup" id="Q14CW9">
    <property type="interactions" value="1439"/>
</dbReference>
<dbReference type="IntAct" id="Q14CW9">
    <property type="interactions" value="39"/>
</dbReference>
<dbReference type="MINT" id="Q14CW9"/>
<dbReference type="STRING" id="9606.ENSP00000397259"/>
<dbReference type="GlyGen" id="Q14CW9">
    <property type="glycosylation" value="1 site"/>
</dbReference>
<dbReference type="iPTMnet" id="Q14CW9"/>
<dbReference type="PhosphoSitePlus" id="Q14CW9"/>
<dbReference type="BioMuta" id="ATXN7L3"/>
<dbReference type="DMDM" id="121948758"/>
<dbReference type="jPOST" id="Q14CW9"/>
<dbReference type="MassIVE" id="Q14CW9"/>
<dbReference type="PaxDb" id="9606-ENSP00000397259"/>
<dbReference type="PeptideAtlas" id="Q14CW9"/>
<dbReference type="ProteomicsDB" id="60332">
    <molecule id="Q14CW9-1"/>
</dbReference>
<dbReference type="ProteomicsDB" id="60333">
    <molecule id="Q14CW9-2"/>
</dbReference>
<dbReference type="Pumba" id="Q14CW9"/>
<dbReference type="Antibodypedia" id="54391">
    <property type="antibodies" value="84 antibodies from 24 providers"/>
</dbReference>
<dbReference type="DNASU" id="56970"/>
<dbReference type="Ensembl" id="ENST00000389384.8">
    <molecule id="Q14CW9-1"/>
    <property type="protein sequence ID" value="ENSP00000374035.3"/>
    <property type="gene ID" value="ENSG00000087152.16"/>
</dbReference>
<dbReference type="Ensembl" id="ENST00000454077.6">
    <molecule id="Q14CW9-2"/>
    <property type="protein sequence ID" value="ENSP00000397259.1"/>
    <property type="gene ID" value="ENSG00000087152.16"/>
</dbReference>
<dbReference type="Ensembl" id="ENST00000587097.6">
    <molecule id="Q14CW9-1"/>
    <property type="protein sequence ID" value="ENSP00000465614.2"/>
    <property type="gene ID" value="ENSG00000087152.16"/>
</dbReference>
<dbReference type="GeneID" id="56970"/>
<dbReference type="MANE-Select" id="ENST00000587097.6">
    <property type="protein sequence ID" value="ENSP00000465614.2"/>
    <property type="RefSeq nucleotide sequence ID" value="NM_001382309.1"/>
    <property type="RefSeq protein sequence ID" value="NP_001369238.1"/>
</dbReference>
<dbReference type="UCSC" id="uc002ifz.4">
    <molecule id="Q14CW9-1"/>
    <property type="organism name" value="human"/>
</dbReference>
<dbReference type="AGR" id="HGNC:25416"/>
<dbReference type="DisGeNET" id="56970"/>
<dbReference type="GeneCards" id="ATXN7L3"/>
<dbReference type="HGNC" id="HGNC:25416">
    <property type="gene designation" value="ATXN7L3"/>
</dbReference>
<dbReference type="HPA" id="ENSG00000087152">
    <property type="expression patterns" value="Low tissue specificity"/>
</dbReference>
<dbReference type="MIM" id="619010">
    <property type="type" value="gene"/>
</dbReference>
<dbReference type="neXtProt" id="NX_Q14CW9"/>
<dbReference type="OpenTargets" id="ENSG00000087152"/>
<dbReference type="PharmGKB" id="PA134991793"/>
<dbReference type="VEuPathDB" id="HostDB:ENSG00000087152"/>
<dbReference type="eggNOG" id="KOG2612">
    <property type="taxonomic scope" value="Eukaryota"/>
</dbReference>
<dbReference type="GeneTree" id="ENSGT00940000158253"/>
<dbReference type="InParanoid" id="Q14CW9"/>
<dbReference type="OMA" id="LCTRSMR"/>
<dbReference type="OrthoDB" id="21557at2759"/>
<dbReference type="PAN-GO" id="Q14CW9">
    <property type="GO annotations" value="6 GO annotations based on evolutionary models"/>
</dbReference>
<dbReference type="PhylomeDB" id="Q14CW9"/>
<dbReference type="TreeFam" id="TF324580"/>
<dbReference type="PathwayCommons" id="Q14CW9"/>
<dbReference type="Reactome" id="R-HSA-3214847">
    <property type="pathway name" value="HATs acetylate histones"/>
</dbReference>
<dbReference type="SignaLink" id="Q14CW9"/>
<dbReference type="SIGNOR" id="Q14CW9"/>
<dbReference type="BioGRID-ORCS" id="56970">
    <property type="hits" value="242 hits in 1173 CRISPR screens"/>
</dbReference>
<dbReference type="ChiTaRS" id="ATXN7L3">
    <property type="organism name" value="human"/>
</dbReference>
<dbReference type="EvolutionaryTrace" id="Q14CW9"/>
<dbReference type="GenomeRNAi" id="56970"/>
<dbReference type="Pharos" id="Q14CW9">
    <property type="development level" value="Tbio"/>
</dbReference>
<dbReference type="PRO" id="PR:Q14CW9"/>
<dbReference type="Proteomes" id="UP000005640">
    <property type="component" value="Chromosome 17"/>
</dbReference>
<dbReference type="RNAct" id="Q14CW9">
    <property type="molecule type" value="protein"/>
</dbReference>
<dbReference type="Bgee" id="ENSG00000087152">
    <property type="expression patterns" value="Expressed in prefrontal cortex and 178 other cell types or tissues"/>
</dbReference>
<dbReference type="ExpressionAtlas" id="Q14CW9">
    <property type="expression patterns" value="baseline and differential"/>
</dbReference>
<dbReference type="GO" id="GO:0071819">
    <property type="term" value="C:DUBm complex"/>
    <property type="evidence" value="ECO:0000314"/>
    <property type="project" value="UniProtKB"/>
</dbReference>
<dbReference type="GO" id="GO:0005634">
    <property type="term" value="C:nucleus"/>
    <property type="evidence" value="ECO:0000314"/>
    <property type="project" value="UniProtKB"/>
</dbReference>
<dbReference type="GO" id="GO:0000124">
    <property type="term" value="C:SAGA complex"/>
    <property type="evidence" value="ECO:0000314"/>
    <property type="project" value="UniProtKB"/>
</dbReference>
<dbReference type="GO" id="GO:0033276">
    <property type="term" value="C:transcription factor TFTC complex"/>
    <property type="evidence" value="ECO:0000303"/>
    <property type="project" value="ComplexPortal"/>
</dbReference>
<dbReference type="GO" id="GO:0003713">
    <property type="term" value="F:transcription coactivator activity"/>
    <property type="evidence" value="ECO:0000314"/>
    <property type="project" value="UniProtKB"/>
</dbReference>
<dbReference type="GO" id="GO:0008270">
    <property type="term" value="F:zinc ion binding"/>
    <property type="evidence" value="ECO:0007669"/>
    <property type="project" value="UniProtKB-UniRule"/>
</dbReference>
<dbReference type="GO" id="GO:0006325">
    <property type="term" value="P:chromatin organization"/>
    <property type="evidence" value="ECO:0007669"/>
    <property type="project" value="UniProtKB-KW"/>
</dbReference>
<dbReference type="GO" id="GO:0045893">
    <property type="term" value="P:positive regulation of DNA-templated transcription"/>
    <property type="evidence" value="ECO:0000314"/>
    <property type="project" value="UniProtKB"/>
</dbReference>
<dbReference type="GO" id="GO:0006282">
    <property type="term" value="P:regulation of DNA repair"/>
    <property type="evidence" value="ECO:0000303"/>
    <property type="project" value="ComplexPortal"/>
</dbReference>
<dbReference type="GO" id="GO:0043484">
    <property type="term" value="P:regulation of RNA splicing"/>
    <property type="evidence" value="ECO:0000303"/>
    <property type="project" value="ComplexPortal"/>
</dbReference>
<dbReference type="GO" id="GO:0006357">
    <property type="term" value="P:regulation of transcription by RNA polymerase II"/>
    <property type="evidence" value="ECO:0000314"/>
    <property type="project" value="ComplexPortal"/>
</dbReference>
<dbReference type="FunFam" id="3.30.160.60:FF:000118">
    <property type="entry name" value="Ataxin-7-like protein 3"/>
    <property type="match status" value="1"/>
</dbReference>
<dbReference type="Gene3D" id="6.10.140.1270">
    <property type="match status" value="1"/>
</dbReference>
<dbReference type="Gene3D" id="3.30.160.60">
    <property type="entry name" value="Classic Zinc Finger"/>
    <property type="match status" value="1"/>
</dbReference>
<dbReference type="HAMAP" id="MF_03047">
    <property type="entry name" value="Sgf11"/>
    <property type="match status" value="1"/>
</dbReference>
<dbReference type="InterPro" id="IPR013246">
    <property type="entry name" value="SAGA_su_Sgf11"/>
</dbReference>
<dbReference type="InterPro" id="IPR013243">
    <property type="entry name" value="SCA7_dom"/>
</dbReference>
<dbReference type="InterPro" id="IPR051078">
    <property type="entry name" value="SGF11"/>
</dbReference>
<dbReference type="PANTHER" id="PTHR46367">
    <property type="entry name" value="ATAXIN-7-LIKE PROTEIN 3"/>
    <property type="match status" value="1"/>
</dbReference>
<dbReference type="PANTHER" id="PTHR46367:SF1">
    <property type="entry name" value="ATAXIN-7-LIKE PROTEIN 3"/>
    <property type="match status" value="1"/>
</dbReference>
<dbReference type="Pfam" id="PF08313">
    <property type="entry name" value="SCA7"/>
    <property type="match status" value="1"/>
</dbReference>
<dbReference type="Pfam" id="PF08209">
    <property type="entry name" value="Sgf11"/>
    <property type="match status" value="1"/>
</dbReference>
<dbReference type="PROSITE" id="PS51505">
    <property type="entry name" value="SCA7"/>
    <property type="match status" value="1"/>
</dbReference>
<sequence>MKMEEMSLSGLDNSKLEAIAQEIYADLVEDSCLGFCFEVHRAVKCGYFFLDDTDPDSMKDFEIVDQPGLDIFGQVFNQWKSKECVCPNCSRSIAASRFAPHLEKCLGMGRNSSRIANRRIANSNNMNKSESDQEDNDDINDNDWSYGSEKKAKKRKSDKNPNSPRRSKSLKHKNGELSNSDPFKYNNSTGISYETLGPEELRSLLTTQCGVISEHTKKMCTRSLRCPQHTDEQRRTVRIYFLGPSAVLPEVESSLDNDSFDMTDSQALISRLQWDGSSDLSPSDSGSSKTSENQGWGLGTNSSESRKTKKKKSHLSLVGTASGLGSNKKKKPKPPAPPTPSIYDDIN</sequence>
<proteinExistence type="evidence at protein level"/>
<evidence type="ECO:0000255" key="1">
    <source>
        <dbReference type="HAMAP-Rule" id="MF_03047"/>
    </source>
</evidence>
<evidence type="ECO:0000256" key="2">
    <source>
        <dbReference type="SAM" id="MobiDB-lite"/>
    </source>
</evidence>
<evidence type="ECO:0000269" key="3">
    <source>
    </source>
</evidence>
<evidence type="ECO:0000269" key="4">
    <source>
    </source>
</evidence>
<evidence type="ECO:0000269" key="5">
    <source>
    </source>
</evidence>
<evidence type="ECO:0000303" key="6">
    <source>
    </source>
</evidence>
<evidence type="ECO:0000305" key="7"/>
<evidence type="ECO:0007744" key="8">
    <source>
    </source>
</evidence>
<evidence type="ECO:0007744" key="9">
    <source>
    </source>
</evidence>
<evidence type="ECO:0007744" key="10">
    <source>
    </source>
</evidence>
<evidence type="ECO:0007744" key="11">
    <source>
    </source>
</evidence>
<evidence type="ECO:0007744" key="12">
    <source>
    </source>
</evidence>
<evidence type="ECO:0007744" key="13">
    <source>
    </source>
</evidence>
<evidence type="ECO:0007829" key="14">
    <source>
        <dbReference type="PDB" id="2KKT"/>
    </source>
</evidence>
<feature type="chain" id="PRO_0000278301" description="Ataxin-7-like protein 3">
    <location>
        <begin position="1"/>
        <end position="347"/>
    </location>
</feature>
<feature type="domain" description="SCA7" evidence="1">
    <location>
        <begin position="196"/>
        <end position="263"/>
    </location>
</feature>
<feature type="zinc finger region" description="SGF11-type" evidence="1">
    <location>
        <begin position="84"/>
        <end position="105"/>
    </location>
</feature>
<feature type="region of interest" description="Disordered" evidence="2">
    <location>
        <begin position="116"/>
        <end position="184"/>
    </location>
</feature>
<feature type="region of interest" description="Disordered" evidence="2">
    <location>
        <begin position="275"/>
        <end position="347"/>
    </location>
</feature>
<feature type="compositionally biased region" description="Low complexity" evidence="2">
    <location>
        <begin position="116"/>
        <end position="125"/>
    </location>
</feature>
<feature type="compositionally biased region" description="Acidic residues" evidence="2">
    <location>
        <begin position="132"/>
        <end position="141"/>
    </location>
</feature>
<feature type="compositionally biased region" description="Low complexity" evidence="2">
    <location>
        <begin position="275"/>
        <end position="288"/>
    </location>
</feature>
<feature type="modified residue" description="Phosphoserine" evidence="11">
    <location>
        <position position="129"/>
    </location>
</feature>
<feature type="modified residue" description="Phosphoserine" evidence="11 12">
    <location>
        <position position="131"/>
    </location>
</feature>
<feature type="modified residue" description="Phosphoserine" evidence="9">
    <location>
        <position position="278"/>
    </location>
</feature>
<feature type="modified residue" description="Phosphoserine" evidence="8 9 10 11 12 13">
    <location>
        <position position="281"/>
    </location>
</feature>
<feature type="modified residue" description="Phosphoserine" evidence="10 12">
    <location>
        <position position="326"/>
    </location>
</feature>
<feature type="splice variant" id="VSP_036721" description="In isoform 2." evidence="6">
    <original>K</original>
    <variation>KLWYLPFQ</variation>
    <location>
        <position position="159"/>
    </location>
</feature>
<feature type="helix" evidence="14">
    <location>
        <begin position="199"/>
        <end position="204"/>
    </location>
</feature>
<feature type="turn" evidence="14">
    <location>
        <begin position="205"/>
        <end position="207"/>
    </location>
</feature>
<feature type="turn" evidence="14">
    <location>
        <begin position="214"/>
        <end position="217"/>
    </location>
</feature>
<feature type="strand" evidence="14">
    <location>
        <begin position="226"/>
        <end position="228"/>
    </location>
</feature>
<feature type="helix" evidence="14">
    <location>
        <begin position="231"/>
        <end position="241"/>
    </location>
</feature>
<organism>
    <name type="scientific">Homo sapiens</name>
    <name type="common">Human</name>
    <dbReference type="NCBI Taxonomy" id="9606"/>
    <lineage>
        <taxon>Eukaryota</taxon>
        <taxon>Metazoa</taxon>
        <taxon>Chordata</taxon>
        <taxon>Craniata</taxon>
        <taxon>Vertebrata</taxon>
        <taxon>Euteleostomi</taxon>
        <taxon>Mammalia</taxon>
        <taxon>Eutheria</taxon>
        <taxon>Euarchontoglires</taxon>
        <taxon>Primates</taxon>
        <taxon>Haplorrhini</taxon>
        <taxon>Catarrhini</taxon>
        <taxon>Hominidae</taxon>
        <taxon>Homo</taxon>
    </lineage>
</organism>
<name>AT7L3_HUMAN</name>